<proteinExistence type="inferred from homology"/>
<evidence type="ECO:0000255" key="1">
    <source>
        <dbReference type="HAMAP-Rule" id="MF_00758"/>
    </source>
</evidence>
<dbReference type="EMBL" id="AE017223">
    <property type="protein sequence ID" value="AAX73893.1"/>
    <property type="molecule type" value="Genomic_DNA"/>
</dbReference>
<dbReference type="RefSeq" id="WP_002963638.1">
    <property type="nucleotide sequence ID" value="NC_006932.1"/>
</dbReference>
<dbReference type="SMR" id="Q57EP1"/>
<dbReference type="EnsemblBacteria" id="AAX73893">
    <property type="protein sequence ID" value="AAX73893"/>
    <property type="gene ID" value="BruAb1_0502"/>
</dbReference>
<dbReference type="KEGG" id="bmb:BruAb1_0502"/>
<dbReference type="HOGENOM" id="CLU_057596_1_0_5"/>
<dbReference type="Proteomes" id="UP000000540">
    <property type="component" value="Chromosome I"/>
</dbReference>
<dbReference type="GO" id="GO:0005829">
    <property type="term" value="C:cytosol"/>
    <property type="evidence" value="ECO:0007669"/>
    <property type="project" value="TreeGrafter"/>
</dbReference>
<dbReference type="Gene3D" id="3.40.1740.10">
    <property type="entry name" value="VC0467-like"/>
    <property type="match status" value="1"/>
</dbReference>
<dbReference type="HAMAP" id="MF_00758">
    <property type="entry name" value="UPF0301"/>
    <property type="match status" value="1"/>
</dbReference>
<dbReference type="InterPro" id="IPR003774">
    <property type="entry name" value="AlgH-like"/>
</dbReference>
<dbReference type="NCBIfam" id="NF001268">
    <property type="entry name" value="PRK00228.1-4"/>
    <property type="match status" value="1"/>
</dbReference>
<dbReference type="PANTHER" id="PTHR30327">
    <property type="entry name" value="UNCHARACTERIZED PROTEIN YQGE"/>
    <property type="match status" value="1"/>
</dbReference>
<dbReference type="PANTHER" id="PTHR30327:SF1">
    <property type="entry name" value="UPF0301 PROTEIN YQGE"/>
    <property type="match status" value="1"/>
</dbReference>
<dbReference type="Pfam" id="PF02622">
    <property type="entry name" value="DUF179"/>
    <property type="match status" value="1"/>
</dbReference>
<dbReference type="SUPFAM" id="SSF143456">
    <property type="entry name" value="VC0467-like"/>
    <property type="match status" value="1"/>
</dbReference>
<reference key="1">
    <citation type="journal article" date="2005" name="J. Bacteriol.">
        <title>Completion of the genome sequence of Brucella abortus and comparison to the highly similar genomes of Brucella melitensis and Brucella suis.</title>
        <authorList>
            <person name="Halling S.M."/>
            <person name="Peterson-Burch B.D."/>
            <person name="Bricker B.J."/>
            <person name="Zuerner R.L."/>
            <person name="Qing Z."/>
            <person name="Li L.-L."/>
            <person name="Kapur V."/>
            <person name="Alt D.P."/>
            <person name="Olsen S.C."/>
        </authorList>
    </citation>
    <scope>NUCLEOTIDE SEQUENCE [LARGE SCALE GENOMIC DNA]</scope>
    <source>
        <strain>9-941</strain>
    </source>
</reference>
<feature type="chain" id="PRO_0000258804" description="UPF0301 protein BruAb1_0502">
    <location>
        <begin position="1"/>
        <end position="200"/>
    </location>
</feature>
<accession>Q57EP1</accession>
<name>Y502_BRUAB</name>
<gene>
    <name type="ordered locus">BruAb1_0502</name>
</gene>
<sequence>MTTHRKPSQEQGFLNGQFLLAMPGMSDERFARSVVYICAHSDEGAMGFIINQLQPVQFPDLLRQIGVIGEEDLIILPDRAQHMVVRNGGPVDRTRGFVLHSDDYMVDSTMPVSDDVCLTATVDILRAIYGGGGPERALMALGYSGWAPGQLEMEVAENGWLTCDAPLDMLFDSDIEGKYSRLMLHMGIDMSRLVFDAGHA</sequence>
<comment type="similarity">
    <text evidence="1">Belongs to the UPF0301 (AlgH) family.</text>
</comment>
<organism>
    <name type="scientific">Brucella abortus biovar 1 (strain 9-941)</name>
    <dbReference type="NCBI Taxonomy" id="262698"/>
    <lineage>
        <taxon>Bacteria</taxon>
        <taxon>Pseudomonadati</taxon>
        <taxon>Pseudomonadota</taxon>
        <taxon>Alphaproteobacteria</taxon>
        <taxon>Hyphomicrobiales</taxon>
        <taxon>Brucellaceae</taxon>
        <taxon>Brucella/Ochrobactrum group</taxon>
        <taxon>Brucella</taxon>
    </lineage>
</organism>
<protein>
    <recommendedName>
        <fullName evidence="1">UPF0301 protein BruAb1_0502</fullName>
    </recommendedName>
</protein>